<keyword id="KW-0131">Cell cycle</keyword>
<keyword id="KW-0132">Cell division</keyword>
<keyword id="KW-0997">Cell inner membrane</keyword>
<keyword id="KW-1003">Cell membrane</keyword>
<keyword id="KW-0449">Lipoprotein</keyword>
<keyword id="KW-0472">Membrane</keyword>
<keyword id="KW-0564">Palmitate</keyword>
<keyword id="KW-1185">Reference proteome</keyword>
<keyword id="KW-0677">Repeat</keyword>
<keyword id="KW-0732">Signal</keyword>
<proteinExistence type="evidence at protein level"/>
<accession>P0ADA3</accession>
<accession>P33648</accession>
<accession>Q2MA87</accession>
<name>NLPD_ECOLI</name>
<evidence type="ECO:0000255" key="1">
    <source>
        <dbReference type="PROSITE-ProRule" id="PRU00303"/>
    </source>
</evidence>
<evidence type="ECO:0000255" key="2">
    <source>
        <dbReference type="PROSITE-ProRule" id="PRU01118"/>
    </source>
</evidence>
<evidence type="ECO:0000256" key="3">
    <source>
        <dbReference type="SAM" id="MobiDB-lite"/>
    </source>
</evidence>
<evidence type="ECO:0000269" key="4">
    <source>
    </source>
</evidence>
<evidence type="ECO:0000269" key="5">
    <source>
    </source>
</evidence>
<evidence type="ECO:0000269" key="6">
    <source>
    </source>
</evidence>
<evidence type="ECO:0000305" key="7"/>
<evidence type="ECO:0000305" key="8">
    <source>
    </source>
</evidence>
<sequence length="379" mass="40149">MSAGSPKFTVRRIAALSLVSLWLAGCSDTSNPPAPVSSVNGNAPANTNSGMLITPPPKMGTTSTAQQPQIQPVQQPQIQATQQPQIQPVQPVAQQPVQMENGRIVYNRQYGNIPKGSYSGSTYTVKKGDTLFYIAWITGNDFRDLAQRNNIQAPYALNVGQTLQVGNASGTPITGGNAITQADAAEQGVVIKPAQNSTVAVASQPTITYSESSGEQSANKMLPNNKPTATTVTAPVTVPTASTTEPTVSSTSTSTPISTWRWPTEGKVIETFGASEGGNKGIDIAGSKGQAIIATADGRVVYAGNALRGYGNLIIIKHNDDYLSAYAHNDTMLVREQQEVKAGQKIATMGSTGTSSTRLHFEIRYKGKSVNPLRYLPQR</sequence>
<organism>
    <name type="scientific">Escherichia coli (strain K12)</name>
    <dbReference type="NCBI Taxonomy" id="83333"/>
    <lineage>
        <taxon>Bacteria</taxon>
        <taxon>Pseudomonadati</taxon>
        <taxon>Pseudomonadota</taxon>
        <taxon>Gammaproteobacteria</taxon>
        <taxon>Enterobacterales</taxon>
        <taxon>Enterobacteriaceae</taxon>
        <taxon>Escherichia</taxon>
    </lineage>
</organism>
<feature type="signal peptide">
    <location>
        <begin position="1"/>
        <end position="25"/>
    </location>
</feature>
<feature type="chain" id="PRO_0000018029" description="Murein hydrolase activator NlpD">
    <location>
        <begin position="26"/>
        <end position="379"/>
    </location>
</feature>
<feature type="repeat" description="1-1">
    <location>
        <begin position="66"/>
        <end position="73"/>
    </location>
</feature>
<feature type="repeat" description="1-2; approximate">
    <location>
        <begin position="74"/>
        <end position="81"/>
    </location>
</feature>
<feature type="repeat" description="1-3">
    <location>
        <begin position="82"/>
        <end position="89"/>
    </location>
</feature>
<feature type="repeat" description="1-4; approximate">
    <location>
        <begin position="90"/>
        <end position="97"/>
    </location>
</feature>
<feature type="domain" description="LysM" evidence="2">
    <location>
        <begin position="121"/>
        <end position="165"/>
    </location>
</feature>
<feature type="repeat" description="2-1">
    <location>
        <begin position="205"/>
        <end position="211"/>
    </location>
</feature>
<feature type="repeat" description="2-2">
    <location>
        <begin position="227"/>
        <end position="233"/>
    </location>
</feature>
<feature type="repeat" description="2-3">
    <location>
        <begin position="239"/>
        <end position="245"/>
    </location>
</feature>
<feature type="repeat" description="2-4">
    <location>
        <begin position="246"/>
        <end position="252"/>
    </location>
</feature>
<feature type="region of interest" description="Disordered" evidence="3">
    <location>
        <begin position="30"/>
        <end position="67"/>
    </location>
</feature>
<feature type="region of interest" description="4 X 8 AA tandem repeats of Q-Q-P-Q-I-Q-P-V">
    <location>
        <begin position="66"/>
        <end position="97"/>
    </location>
</feature>
<feature type="region of interest" description="4 X 7 AA approximate repeats">
    <location>
        <begin position="205"/>
        <end position="252"/>
    </location>
</feature>
<feature type="region of interest" description="Disordered" evidence="3">
    <location>
        <begin position="210"/>
        <end position="231"/>
    </location>
</feature>
<feature type="region of interest" description="Disordered" evidence="3">
    <location>
        <begin position="240"/>
        <end position="259"/>
    </location>
</feature>
<feature type="compositionally biased region" description="Polar residues" evidence="3">
    <location>
        <begin position="30"/>
        <end position="51"/>
    </location>
</feature>
<feature type="compositionally biased region" description="Polar residues" evidence="3">
    <location>
        <begin position="210"/>
        <end position="219"/>
    </location>
</feature>
<feature type="lipid moiety-binding region" description="N-palmitoyl cysteine" evidence="1 6">
    <location>
        <position position="26"/>
    </location>
</feature>
<feature type="lipid moiety-binding region" description="S-diacylglycerol cysteine" evidence="8">
    <location>
        <position position="26"/>
    </location>
</feature>
<feature type="sequence conflict" description="In Ref. 4; BAA04487." evidence="7" ref="4">
    <original>G</original>
    <variation>A</variation>
    <location>
        <position position="139"/>
    </location>
</feature>
<protein>
    <recommendedName>
        <fullName>Murein hydrolase activator NlpD</fullName>
    </recommendedName>
</protein>
<comment type="function">
    <text evidence="4 5">Activator of the cell wall hydrolase AmiC. Required for septal murein cleavage and daughter cell separation during cell division.</text>
</comment>
<comment type="subcellular location">
    <subcellularLocation>
        <location evidence="7">Cell inner membrane</location>
        <topology evidence="1">Lipid-anchor</topology>
    </subcellularLocation>
    <text evidence="4">Localizes at the septal ring.</text>
</comment>
<comment type="disruption phenotype">
    <text evidence="4">Cells are shorter in a single mutant, double envC-nlpD disruptions have defects in septation and cell separation and form long filaments (8-fold longer). Cell length increase is more exacerbated with a triple mepM (yebA) or ygeR disruption (15-fold longer) and further yet by the quadruple disruption mutant (envC-nlpD-mepM(yebA)-ygeR, over 21-fold longer). Quadruple mutants are less sensitive to ampicillin lysis.</text>
</comment>
<comment type="similarity">
    <text evidence="7">Belongs to the E.coli NlpD/Haemophilus LppB family.</text>
</comment>
<gene>
    <name type="primary">nlpD</name>
    <name type="ordered locus">b2742</name>
    <name type="ordered locus">JW2712</name>
</gene>
<reference key="1">
    <citation type="journal article" date="1994" name="J. Bacteriol.">
        <title>A gene at 59 minutes on the Escherichia coli chromosome encodes a lipoprotein with unusual amino acid repeat sequences.</title>
        <authorList>
            <person name="Ichikawa J.K."/>
            <person name="Li C."/>
            <person name="Fu J.C."/>
            <person name="Clarke S."/>
        </authorList>
    </citation>
    <scope>NUCLEOTIDE SEQUENCE [GENOMIC DNA]</scope>
    <scope>DIACYLGLYCEROL AT CYS-26</scope>
    <scope>PALMITOYLATION AT CYS-26</scope>
    <source>
        <strain>MP180</strain>
    </source>
</reference>
<reference key="2">
    <citation type="journal article" date="1997" name="Science">
        <title>The complete genome sequence of Escherichia coli K-12.</title>
        <authorList>
            <person name="Blattner F.R."/>
            <person name="Plunkett G. III"/>
            <person name="Bloch C.A."/>
            <person name="Perna N.T."/>
            <person name="Burland V."/>
            <person name="Riley M."/>
            <person name="Collado-Vides J."/>
            <person name="Glasner J.D."/>
            <person name="Rode C.K."/>
            <person name="Mayhew G.F."/>
            <person name="Gregor J."/>
            <person name="Davis N.W."/>
            <person name="Kirkpatrick H.A."/>
            <person name="Goeden M.A."/>
            <person name="Rose D.J."/>
            <person name="Mau B."/>
            <person name="Shao Y."/>
        </authorList>
    </citation>
    <scope>NUCLEOTIDE SEQUENCE [LARGE SCALE GENOMIC DNA]</scope>
    <source>
        <strain>K12 / MG1655 / ATCC 47076</strain>
    </source>
</reference>
<reference key="3">
    <citation type="journal article" date="2006" name="Mol. Syst. Biol.">
        <title>Highly accurate genome sequences of Escherichia coli K-12 strains MG1655 and W3110.</title>
        <authorList>
            <person name="Hayashi K."/>
            <person name="Morooka N."/>
            <person name="Yamamoto Y."/>
            <person name="Fujita K."/>
            <person name="Isono K."/>
            <person name="Choi S."/>
            <person name="Ohtsubo E."/>
            <person name="Baba T."/>
            <person name="Wanner B.L."/>
            <person name="Mori H."/>
            <person name="Horiuchi T."/>
        </authorList>
    </citation>
    <scope>NUCLEOTIDE SEQUENCE [LARGE SCALE GENOMIC DNA]</scope>
    <source>
        <strain>K12 / W3110 / ATCC 27325 / DSM 5911</strain>
    </source>
</reference>
<reference key="4">
    <citation type="journal article" date="1994" name="Mol. Gen. Genet.">
        <title>Structure of the 5' upstream region and the regulation of the rpoS gene of Escherichia coli.</title>
        <authorList>
            <person name="Takayanagi Y."/>
            <person name="Tanaka K."/>
            <person name="Takahashi H."/>
        </authorList>
    </citation>
    <scope>NUCLEOTIDE SEQUENCE [GENOMIC DNA] OF 99-379</scope>
    <source>
        <strain>K12 / DH1 / ATCC 33849 / DSM 4235 / NCIB 12045</strain>
    </source>
</reference>
<reference key="5">
    <citation type="journal article" date="2009" name="J. Bacteriol.">
        <title>LytM-domain factors are required for daughter cell separation and rapid ampicillin-induced lysis in Escherichia coli.</title>
        <authorList>
            <person name="Uehara T."/>
            <person name="Dinh T."/>
            <person name="Bernhardt T.G."/>
        </authorList>
    </citation>
    <scope>FUNCTION</scope>
    <scope>SUBCELLULAR LOCATION</scope>
    <scope>DISRUPTION PHENOTYPE</scope>
    <source>
        <strain>K12 / MG1655 / TB28</strain>
    </source>
</reference>
<reference key="6">
    <citation type="journal article" date="2010" name="EMBO J.">
        <title>Daughter cell separation is controlled by cytokinetic ring-activated cell wall hydrolysis.</title>
        <authorList>
            <person name="Uehara T."/>
            <person name="Parzych K.R."/>
            <person name="Dinh T."/>
            <person name="Bernhardt T.G."/>
        </authorList>
    </citation>
    <scope>FUNCTION AS AN ACTIVATOR</scope>
    <source>
        <strain>K12 / MG1655 / ATCC 47076</strain>
    </source>
</reference>
<dbReference type="EMBL" id="L07869">
    <property type="protein sequence ID" value="AAA17875.1"/>
    <property type="molecule type" value="Unassigned_DNA"/>
</dbReference>
<dbReference type="EMBL" id="U29579">
    <property type="protein sequence ID" value="AAA69252.1"/>
    <property type="molecule type" value="Genomic_DNA"/>
</dbReference>
<dbReference type="EMBL" id="U00096">
    <property type="protein sequence ID" value="AAC75784.1"/>
    <property type="molecule type" value="Genomic_DNA"/>
</dbReference>
<dbReference type="EMBL" id="AP009048">
    <property type="protein sequence ID" value="BAE76819.1"/>
    <property type="molecule type" value="Genomic_DNA"/>
</dbReference>
<dbReference type="EMBL" id="D17549">
    <property type="protein sequence ID" value="BAA04487.1"/>
    <property type="molecule type" value="Genomic_DNA"/>
</dbReference>
<dbReference type="PIR" id="B55522">
    <property type="entry name" value="B55522"/>
</dbReference>
<dbReference type="RefSeq" id="NP_417222.1">
    <property type="nucleotide sequence ID" value="NC_000913.3"/>
</dbReference>
<dbReference type="SMR" id="P0ADA3"/>
<dbReference type="BioGRID" id="4261894">
    <property type="interactions" value="278"/>
</dbReference>
<dbReference type="DIP" id="DIP-48067N"/>
<dbReference type="FunCoup" id="P0ADA3">
    <property type="interactions" value="101"/>
</dbReference>
<dbReference type="IntAct" id="P0ADA3">
    <property type="interactions" value="4"/>
</dbReference>
<dbReference type="STRING" id="511145.b2742"/>
<dbReference type="jPOST" id="P0ADA3"/>
<dbReference type="PaxDb" id="511145-b2742"/>
<dbReference type="EnsemblBacteria" id="AAC75784">
    <property type="protein sequence ID" value="AAC75784"/>
    <property type="gene ID" value="b2742"/>
</dbReference>
<dbReference type="GeneID" id="947011"/>
<dbReference type="KEGG" id="ecj:JW2712"/>
<dbReference type="KEGG" id="eco:b2742"/>
<dbReference type="KEGG" id="ecoc:C3026_15080"/>
<dbReference type="PATRIC" id="fig|1411691.4.peg.3998"/>
<dbReference type="EchoBASE" id="EB2034"/>
<dbReference type="eggNOG" id="COG1388">
    <property type="taxonomic scope" value="Bacteria"/>
</dbReference>
<dbReference type="eggNOG" id="COG4942">
    <property type="taxonomic scope" value="Bacteria"/>
</dbReference>
<dbReference type="HOGENOM" id="CLU_029425_0_1_6"/>
<dbReference type="InParanoid" id="P0ADA3"/>
<dbReference type="OMA" id="YAHNDKI"/>
<dbReference type="OrthoDB" id="9795421at2"/>
<dbReference type="PhylomeDB" id="P0ADA3"/>
<dbReference type="BioCyc" id="EcoCyc:EG12111-MONOMER"/>
<dbReference type="BioCyc" id="MetaCyc:EG12111-MONOMER"/>
<dbReference type="PRO" id="PR:P0ADA3"/>
<dbReference type="Proteomes" id="UP000000625">
    <property type="component" value="Chromosome"/>
</dbReference>
<dbReference type="GO" id="GO:0032153">
    <property type="term" value="C:cell division site"/>
    <property type="evidence" value="ECO:0000314"/>
    <property type="project" value="EcoliWiki"/>
</dbReference>
<dbReference type="GO" id="GO:0009279">
    <property type="term" value="C:cell outer membrane"/>
    <property type="evidence" value="ECO:0000314"/>
    <property type="project" value="EcoCyc"/>
</dbReference>
<dbReference type="GO" id="GO:0005886">
    <property type="term" value="C:plasma membrane"/>
    <property type="evidence" value="ECO:0007669"/>
    <property type="project" value="UniProtKB-SubCell"/>
</dbReference>
<dbReference type="GO" id="GO:0004222">
    <property type="term" value="F:metalloendopeptidase activity"/>
    <property type="evidence" value="ECO:0000318"/>
    <property type="project" value="GO_Central"/>
</dbReference>
<dbReference type="GO" id="GO:0051301">
    <property type="term" value="P:cell division"/>
    <property type="evidence" value="ECO:0007669"/>
    <property type="project" value="UniProtKB-KW"/>
</dbReference>
<dbReference type="GO" id="GO:0009410">
    <property type="term" value="P:response to xenobiotic stimulus"/>
    <property type="evidence" value="ECO:0000315"/>
    <property type="project" value="EcoCyc"/>
</dbReference>
<dbReference type="CDD" id="cd00118">
    <property type="entry name" value="LysM"/>
    <property type="match status" value="1"/>
</dbReference>
<dbReference type="CDD" id="cd12797">
    <property type="entry name" value="M23_peptidase"/>
    <property type="match status" value="1"/>
</dbReference>
<dbReference type="FunFam" id="3.10.350.10:FF:000008">
    <property type="entry name" value="Murein hydrolase activator NlpD"/>
    <property type="match status" value="1"/>
</dbReference>
<dbReference type="FunFam" id="2.70.70.10:FF:000004">
    <property type="entry name" value="NlpD family lipoprotein"/>
    <property type="match status" value="1"/>
</dbReference>
<dbReference type="Gene3D" id="2.70.70.10">
    <property type="entry name" value="Glucose Permease (Domain IIA)"/>
    <property type="match status" value="1"/>
</dbReference>
<dbReference type="Gene3D" id="3.10.350.10">
    <property type="entry name" value="LysM domain"/>
    <property type="match status" value="1"/>
</dbReference>
<dbReference type="InterPro" id="IPR050570">
    <property type="entry name" value="Cell_wall_metabolism_enzyme"/>
</dbReference>
<dbReference type="InterPro" id="IPR011055">
    <property type="entry name" value="Dup_hybrid_motif"/>
</dbReference>
<dbReference type="InterPro" id="IPR018392">
    <property type="entry name" value="LysM_dom"/>
</dbReference>
<dbReference type="InterPro" id="IPR036779">
    <property type="entry name" value="LysM_dom_sf"/>
</dbReference>
<dbReference type="InterPro" id="IPR016047">
    <property type="entry name" value="Peptidase_M23"/>
</dbReference>
<dbReference type="NCBIfam" id="NF008123">
    <property type="entry name" value="PRK10871.1"/>
    <property type="match status" value="1"/>
</dbReference>
<dbReference type="PANTHER" id="PTHR21666:SF263">
    <property type="entry name" value="MUREIN HYDROLASE ACTIVATOR NLPD"/>
    <property type="match status" value="1"/>
</dbReference>
<dbReference type="PANTHER" id="PTHR21666">
    <property type="entry name" value="PEPTIDASE-RELATED"/>
    <property type="match status" value="1"/>
</dbReference>
<dbReference type="Pfam" id="PF01476">
    <property type="entry name" value="LysM"/>
    <property type="match status" value="1"/>
</dbReference>
<dbReference type="Pfam" id="PF01551">
    <property type="entry name" value="Peptidase_M23"/>
    <property type="match status" value="1"/>
</dbReference>
<dbReference type="SMART" id="SM00257">
    <property type="entry name" value="LysM"/>
    <property type="match status" value="1"/>
</dbReference>
<dbReference type="SUPFAM" id="SSF51261">
    <property type="entry name" value="Duplicated hybrid motif"/>
    <property type="match status" value="1"/>
</dbReference>
<dbReference type="PROSITE" id="PS51782">
    <property type="entry name" value="LYSM"/>
    <property type="match status" value="1"/>
</dbReference>
<dbReference type="PROSITE" id="PS51257">
    <property type="entry name" value="PROKAR_LIPOPROTEIN"/>
    <property type="match status" value="1"/>
</dbReference>